<gene>
    <name evidence="1" type="primary">mlrA</name>
    <name type="ordered locus">STM2160</name>
</gene>
<organism>
    <name type="scientific">Salmonella typhimurium (strain LT2 / SGSC1412 / ATCC 700720)</name>
    <dbReference type="NCBI Taxonomy" id="99287"/>
    <lineage>
        <taxon>Bacteria</taxon>
        <taxon>Pseudomonadati</taxon>
        <taxon>Pseudomonadota</taxon>
        <taxon>Gammaproteobacteria</taxon>
        <taxon>Enterobacterales</taxon>
        <taxon>Enterobacteriaceae</taxon>
        <taxon>Salmonella</taxon>
    </lineage>
</organism>
<proteinExistence type="inferred from homology"/>
<protein>
    <recommendedName>
        <fullName evidence="1">HTH-type transcriptional regulator MlrA</fullName>
    </recommendedName>
    <alternativeName>
        <fullName evidence="1">MerR-like regulator A</fullName>
    </alternativeName>
</protein>
<accession>P0CL12</accession>
<accession>P58398</accession>
<sequence>MALYTIGEVALLCDINPVTLRAWQRRYGLLKPQRTDGGHRLFNDADIDRIREIKRWIDNGVQVSKVKVLLSSDSSEQPNGWREQQEILLHYLQSSNLHSLRLWVKERGQDYPAQTLTTNLFVPLRRRLQCQQPALQALLGILDGILINYIALCLASARKKQGKDALVIGWNIHDTTRLWLEGWVASQQGWRIDVLAHSLSQFRPELFDGKTLLVWCGENQTLAQQQQLLAWRAQGRDIHPLGV</sequence>
<comment type="function">
    <text evidence="1">Transcriptional activator of csgD, which is required for production of the curli (AgF).</text>
</comment>
<name>MLRA_SALTY</name>
<evidence type="ECO:0000250" key="1">
    <source>
        <dbReference type="UniProtKB" id="E1WH94"/>
    </source>
</evidence>
<evidence type="ECO:0000255" key="2">
    <source>
        <dbReference type="PROSITE-ProRule" id="PRU00254"/>
    </source>
</evidence>
<reference key="1">
    <citation type="journal article" date="2001" name="Nature">
        <title>Complete genome sequence of Salmonella enterica serovar Typhimurium LT2.</title>
        <authorList>
            <person name="McClelland M."/>
            <person name="Sanderson K.E."/>
            <person name="Spieth J."/>
            <person name="Clifton S.W."/>
            <person name="Latreille P."/>
            <person name="Courtney L."/>
            <person name="Porwollik S."/>
            <person name="Ali J."/>
            <person name="Dante M."/>
            <person name="Du F."/>
            <person name="Hou S."/>
            <person name="Layman D."/>
            <person name="Leonard S."/>
            <person name="Nguyen C."/>
            <person name="Scott K."/>
            <person name="Holmes A."/>
            <person name="Grewal N."/>
            <person name="Mulvaney E."/>
            <person name="Ryan E."/>
            <person name="Sun H."/>
            <person name="Florea L."/>
            <person name="Miller W."/>
            <person name="Stoneking T."/>
            <person name="Nhan M."/>
            <person name="Waterston R."/>
            <person name="Wilson R.K."/>
        </authorList>
    </citation>
    <scope>NUCLEOTIDE SEQUENCE [LARGE SCALE GENOMIC DNA]</scope>
    <source>
        <strain>LT2 / SGSC1412 / ATCC 700720</strain>
    </source>
</reference>
<feature type="chain" id="PRO_0000098145" description="HTH-type transcriptional regulator MlrA">
    <location>
        <begin position="1"/>
        <end position="243"/>
    </location>
</feature>
<feature type="domain" description="HTH merR-type" evidence="2">
    <location>
        <begin position="3"/>
        <end position="72"/>
    </location>
</feature>
<feature type="DNA-binding region" description="H-T-H motif" evidence="2">
    <location>
        <begin position="6"/>
        <end position="25"/>
    </location>
</feature>
<keyword id="KW-0010">Activator</keyword>
<keyword id="KW-0238">DNA-binding</keyword>
<keyword id="KW-1185">Reference proteome</keyword>
<keyword id="KW-0804">Transcription</keyword>
<keyword id="KW-0805">Transcription regulation</keyword>
<dbReference type="EMBL" id="AE006468">
    <property type="protein sequence ID" value="AAL21064.1"/>
    <property type="molecule type" value="Genomic_DNA"/>
</dbReference>
<dbReference type="RefSeq" id="WP_001240418.1">
    <property type="nucleotide sequence ID" value="NC_003197.2"/>
</dbReference>
<dbReference type="SMR" id="P0CL12"/>
<dbReference type="STRING" id="99287.STM2160"/>
<dbReference type="PaxDb" id="99287-STM2160"/>
<dbReference type="KEGG" id="stm:STM2160"/>
<dbReference type="PATRIC" id="fig|99287.12.peg.2286"/>
<dbReference type="HOGENOM" id="CLU_045945_0_1_6"/>
<dbReference type="OMA" id="EQGWRVD"/>
<dbReference type="PhylomeDB" id="P0CL12"/>
<dbReference type="BioCyc" id="SENT99287:STM2160-MONOMER"/>
<dbReference type="Proteomes" id="UP000001014">
    <property type="component" value="Chromosome"/>
</dbReference>
<dbReference type="GO" id="GO:0003677">
    <property type="term" value="F:DNA binding"/>
    <property type="evidence" value="ECO:0007669"/>
    <property type="project" value="UniProtKB-KW"/>
</dbReference>
<dbReference type="GO" id="GO:0003700">
    <property type="term" value="F:DNA-binding transcription factor activity"/>
    <property type="evidence" value="ECO:0000318"/>
    <property type="project" value="GO_Central"/>
</dbReference>
<dbReference type="GO" id="GO:0006355">
    <property type="term" value="P:regulation of DNA-templated transcription"/>
    <property type="evidence" value="ECO:0000318"/>
    <property type="project" value="GO_Central"/>
</dbReference>
<dbReference type="CDD" id="cd04763">
    <property type="entry name" value="HTH_MlrA-like"/>
    <property type="match status" value="1"/>
</dbReference>
<dbReference type="FunFam" id="1.10.1660.10:FF:000007">
    <property type="entry name" value="HTH-type transcriptional regulator MlrA"/>
    <property type="match status" value="1"/>
</dbReference>
<dbReference type="Gene3D" id="1.10.1660.10">
    <property type="match status" value="1"/>
</dbReference>
<dbReference type="InterPro" id="IPR009061">
    <property type="entry name" value="DNA-bd_dom_put_sf"/>
</dbReference>
<dbReference type="InterPro" id="IPR000551">
    <property type="entry name" value="MerR-type_HTH_dom"/>
</dbReference>
<dbReference type="InterPro" id="IPR047057">
    <property type="entry name" value="MerR_fam"/>
</dbReference>
<dbReference type="InterPro" id="IPR053987">
    <property type="entry name" value="MlrA-like_C"/>
</dbReference>
<dbReference type="InterPro" id="IPR053988">
    <property type="entry name" value="MlrA-like_helical"/>
</dbReference>
<dbReference type="InterPro" id="IPR048225">
    <property type="entry name" value="MlrA-like_HTH"/>
</dbReference>
<dbReference type="NCBIfam" id="NF011617">
    <property type="entry name" value="PRK15043.1"/>
    <property type="match status" value="1"/>
</dbReference>
<dbReference type="PANTHER" id="PTHR30204:SF67">
    <property type="entry name" value="HTH-TYPE TRANSCRIPTIONAL REGULATOR MLRA-RELATED"/>
    <property type="match status" value="1"/>
</dbReference>
<dbReference type="PANTHER" id="PTHR30204">
    <property type="entry name" value="REDOX-CYCLING DRUG-SENSING TRANSCRIPTIONAL ACTIVATOR SOXR"/>
    <property type="match status" value="1"/>
</dbReference>
<dbReference type="Pfam" id="PF13411">
    <property type="entry name" value="MerR_1"/>
    <property type="match status" value="1"/>
</dbReference>
<dbReference type="Pfam" id="PF22267">
    <property type="entry name" value="MlrA_C"/>
    <property type="match status" value="1"/>
</dbReference>
<dbReference type="Pfam" id="PF22270">
    <property type="entry name" value="MlrA_helical"/>
    <property type="match status" value="1"/>
</dbReference>
<dbReference type="SMART" id="SM00422">
    <property type="entry name" value="HTH_MERR"/>
    <property type="match status" value="1"/>
</dbReference>
<dbReference type="SUPFAM" id="SSF46955">
    <property type="entry name" value="Putative DNA-binding domain"/>
    <property type="match status" value="1"/>
</dbReference>
<dbReference type="PROSITE" id="PS00552">
    <property type="entry name" value="HTH_MERR_1"/>
    <property type="match status" value="1"/>
</dbReference>
<dbReference type="PROSITE" id="PS50937">
    <property type="entry name" value="HTH_MERR_2"/>
    <property type="match status" value="1"/>
</dbReference>